<feature type="chain" id="PRO_1000053325" description="ATP synthase gamma chain">
    <location>
        <begin position="1"/>
        <end position="286"/>
    </location>
</feature>
<reference key="1">
    <citation type="submission" date="2007-02" db="EMBL/GenBank/DDBJ databases">
        <title>Complete sequence of chromosome of Shewanella baltica OS155.</title>
        <authorList>
            <consortium name="US DOE Joint Genome Institute"/>
            <person name="Copeland A."/>
            <person name="Lucas S."/>
            <person name="Lapidus A."/>
            <person name="Barry K."/>
            <person name="Detter J.C."/>
            <person name="Glavina del Rio T."/>
            <person name="Hammon N."/>
            <person name="Israni S."/>
            <person name="Dalin E."/>
            <person name="Tice H."/>
            <person name="Pitluck S."/>
            <person name="Sims D.R."/>
            <person name="Brettin T."/>
            <person name="Bruce D."/>
            <person name="Han C."/>
            <person name="Tapia R."/>
            <person name="Brainard J."/>
            <person name="Schmutz J."/>
            <person name="Larimer F."/>
            <person name="Land M."/>
            <person name="Hauser L."/>
            <person name="Kyrpides N."/>
            <person name="Mikhailova N."/>
            <person name="Brettar I."/>
            <person name="Klappenbach J."/>
            <person name="Konstantinidis K."/>
            <person name="Rodrigues J."/>
            <person name="Tiedje J."/>
            <person name="Richardson P."/>
        </authorList>
    </citation>
    <scope>NUCLEOTIDE SEQUENCE [LARGE SCALE GENOMIC DNA]</scope>
    <source>
        <strain>OS155 / ATCC BAA-1091</strain>
    </source>
</reference>
<organism>
    <name type="scientific">Shewanella baltica (strain OS155 / ATCC BAA-1091)</name>
    <dbReference type="NCBI Taxonomy" id="325240"/>
    <lineage>
        <taxon>Bacteria</taxon>
        <taxon>Pseudomonadati</taxon>
        <taxon>Pseudomonadota</taxon>
        <taxon>Gammaproteobacteria</taxon>
        <taxon>Alteromonadales</taxon>
        <taxon>Shewanellaceae</taxon>
        <taxon>Shewanella</taxon>
    </lineage>
</organism>
<dbReference type="EMBL" id="CP000563">
    <property type="protein sequence ID" value="ABN63828.1"/>
    <property type="molecule type" value="Genomic_DNA"/>
</dbReference>
<dbReference type="RefSeq" id="WP_006084762.1">
    <property type="nucleotide sequence ID" value="NC_009052.1"/>
</dbReference>
<dbReference type="SMR" id="A3DAR5"/>
<dbReference type="STRING" id="325240.Sbal_4367"/>
<dbReference type="GeneID" id="11774461"/>
<dbReference type="KEGG" id="sbl:Sbal_4367"/>
<dbReference type="HOGENOM" id="CLU_050669_0_1_6"/>
<dbReference type="OrthoDB" id="9812769at2"/>
<dbReference type="Proteomes" id="UP000001557">
    <property type="component" value="Chromosome"/>
</dbReference>
<dbReference type="GO" id="GO:0005886">
    <property type="term" value="C:plasma membrane"/>
    <property type="evidence" value="ECO:0007669"/>
    <property type="project" value="UniProtKB-SubCell"/>
</dbReference>
<dbReference type="GO" id="GO:0045259">
    <property type="term" value="C:proton-transporting ATP synthase complex"/>
    <property type="evidence" value="ECO:0007669"/>
    <property type="project" value="UniProtKB-KW"/>
</dbReference>
<dbReference type="GO" id="GO:0005524">
    <property type="term" value="F:ATP binding"/>
    <property type="evidence" value="ECO:0007669"/>
    <property type="project" value="UniProtKB-UniRule"/>
</dbReference>
<dbReference type="GO" id="GO:0046933">
    <property type="term" value="F:proton-transporting ATP synthase activity, rotational mechanism"/>
    <property type="evidence" value="ECO:0007669"/>
    <property type="project" value="UniProtKB-UniRule"/>
</dbReference>
<dbReference type="GO" id="GO:0042777">
    <property type="term" value="P:proton motive force-driven plasma membrane ATP synthesis"/>
    <property type="evidence" value="ECO:0007669"/>
    <property type="project" value="UniProtKB-UniRule"/>
</dbReference>
<dbReference type="CDD" id="cd12151">
    <property type="entry name" value="F1-ATPase_gamma"/>
    <property type="match status" value="1"/>
</dbReference>
<dbReference type="FunFam" id="1.10.287.80:FF:000005">
    <property type="entry name" value="ATP synthase gamma chain"/>
    <property type="match status" value="2"/>
</dbReference>
<dbReference type="FunFam" id="3.40.1380.10:FF:000001">
    <property type="entry name" value="ATP synthase gamma chain"/>
    <property type="match status" value="1"/>
</dbReference>
<dbReference type="Gene3D" id="3.40.1380.10">
    <property type="match status" value="1"/>
</dbReference>
<dbReference type="Gene3D" id="1.10.287.80">
    <property type="entry name" value="ATP synthase, gamma subunit, helix hairpin domain"/>
    <property type="match status" value="2"/>
</dbReference>
<dbReference type="HAMAP" id="MF_00815">
    <property type="entry name" value="ATP_synth_gamma_bact"/>
    <property type="match status" value="1"/>
</dbReference>
<dbReference type="InterPro" id="IPR035968">
    <property type="entry name" value="ATP_synth_F1_ATPase_gsu"/>
</dbReference>
<dbReference type="InterPro" id="IPR000131">
    <property type="entry name" value="ATP_synth_F1_gsu"/>
</dbReference>
<dbReference type="InterPro" id="IPR023632">
    <property type="entry name" value="ATP_synth_F1_gsu_CS"/>
</dbReference>
<dbReference type="NCBIfam" id="TIGR01146">
    <property type="entry name" value="ATPsyn_F1gamma"/>
    <property type="match status" value="1"/>
</dbReference>
<dbReference type="NCBIfam" id="NF004144">
    <property type="entry name" value="PRK05621.1-1"/>
    <property type="match status" value="1"/>
</dbReference>
<dbReference type="PANTHER" id="PTHR11693">
    <property type="entry name" value="ATP SYNTHASE GAMMA CHAIN"/>
    <property type="match status" value="1"/>
</dbReference>
<dbReference type="PANTHER" id="PTHR11693:SF22">
    <property type="entry name" value="ATP SYNTHASE SUBUNIT GAMMA, MITOCHONDRIAL"/>
    <property type="match status" value="1"/>
</dbReference>
<dbReference type="Pfam" id="PF00231">
    <property type="entry name" value="ATP-synt"/>
    <property type="match status" value="1"/>
</dbReference>
<dbReference type="PRINTS" id="PR00126">
    <property type="entry name" value="ATPASEGAMMA"/>
</dbReference>
<dbReference type="SUPFAM" id="SSF52943">
    <property type="entry name" value="ATP synthase (F1-ATPase), gamma subunit"/>
    <property type="match status" value="1"/>
</dbReference>
<dbReference type="PROSITE" id="PS00153">
    <property type="entry name" value="ATPASE_GAMMA"/>
    <property type="match status" value="1"/>
</dbReference>
<gene>
    <name evidence="1" type="primary">atpG</name>
    <name type="ordered locus">Sbal_4367</name>
</gene>
<protein>
    <recommendedName>
        <fullName evidence="1">ATP synthase gamma chain</fullName>
    </recommendedName>
    <alternativeName>
        <fullName evidence="1">ATP synthase F1 sector gamma subunit</fullName>
    </alternativeName>
    <alternativeName>
        <fullName evidence="1">F-ATPase gamma subunit</fullName>
    </alternativeName>
</protein>
<sequence>MAGAKEIKTKIASVKNTQKITSAMEMVAASKMRRAQERMAASRPYAESMRKVIGHVAQGSLEYKHPYLEVREAKRVGYIVVATDRGLCGGLNVNLFKKVIADVKSWKAQGAEFEFCPIGARSVQFFKNFGGQVSAHASGLGDAPKLADLIGTVGVMLEAYNEGKLDRLYVVFNKFVNTMTQTPVIEQLLPLPKSEDDETAHRWDYIYEPDPKALLDTLLVRYVESQVYQGVVENIASEQAARMVAMKSATDNAGELINDLQLVYNKARQAAITQELSEIVSGASAV</sequence>
<keyword id="KW-0066">ATP synthesis</keyword>
<keyword id="KW-0997">Cell inner membrane</keyword>
<keyword id="KW-1003">Cell membrane</keyword>
<keyword id="KW-0139">CF(1)</keyword>
<keyword id="KW-0375">Hydrogen ion transport</keyword>
<keyword id="KW-0406">Ion transport</keyword>
<keyword id="KW-0472">Membrane</keyword>
<keyword id="KW-1185">Reference proteome</keyword>
<keyword id="KW-0813">Transport</keyword>
<proteinExistence type="inferred from homology"/>
<comment type="function">
    <text evidence="1">Produces ATP from ADP in the presence of a proton gradient across the membrane. The gamma chain is believed to be important in regulating ATPase activity and the flow of protons through the CF(0) complex.</text>
</comment>
<comment type="subunit">
    <text evidence="1">F-type ATPases have 2 components, CF(1) - the catalytic core - and CF(0) - the membrane proton channel. CF(1) has five subunits: alpha(3), beta(3), gamma(1), delta(1), epsilon(1). CF(0) has three main subunits: a, b and c.</text>
</comment>
<comment type="subcellular location">
    <subcellularLocation>
        <location evidence="1">Cell inner membrane</location>
        <topology evidence="1">Peripheral membrane protein</topology>
    </subcellularLocation>
</comment>
<comment type="similarity">
    <text evidence="1">Belongs to the ATPase gamma chain family.</text>
</comment>
<accession>A3DAR5</accession>
<name>ATPG_SHEB5</name>
<evidence type="ECO:0000255" key="1">
    <source>
        <dbReference type="HAMAP-Rule" id="MF_00815"/>
    </source>
</evidence>